<organism>
    <name type="scientific">Mycobacterium tuberculosis (strain CDC 1551 / Oshkosh)</name>
    <dbReference type="NCBI Taxonomy" id="83331"/>
    <lineage>
        <taxon>Bacteria</taxon>
        <taxon>Bacillati</taxon>
        <taxon>Actinomycetota</taxon>
        <taxon>Actinomycetes</taxon>
        <taxon>Mycobacteriales</taxon>
        <taxon>Mycobacteriaceae</taxon>
        <taxon>Mycobacterium</taxon>
        <taxon>Mycobacterium tuberculosis complex</taxon>
    </lineage>
</organism>
<name>COAX_MYCTO</name>
<feature type="chain" id="PRO_0000426988" description="Type III pantothenate kinase">
    <location>
        <begin position="1"/>
        <end position="272"/>
    </location>
</feature>
<feature type="active site" description="Proton acceptor" evidence="1">
    <location>
        <position position="111"/>
    </location>
</feature>
<feature type="binding site" evidence="1">
    <location>
        <begin position="6"/>
        <end position="13"/>
    </location>
    <ligand>
        <name>ATP</name>
        <dbReference type="ChEBI" id="CHEBI:30616"/>
    </ligand>
</feature>
<feature type="binding site" evidence="1">
    <location>
        <begin position="109"/>
        <end position="112"/>
    </location>
    <ligand>
        <name>substrate</name>
    </ligand>
</feature>
<feature type="binding site" evidence="1">
    <location>
        <position position="131"/>
    </location>
    <ligand>
        <name>K(+)</name>
        <dbReference type="ChEBI" id="CHEBI:29103"/>
    </ligand>
</feature>
<feature type="binding site" evidence="1">
    <location>
        <position position="134"/>
    </location>
    <ligand>
        <name>ATP</name>
        <dbReference type="ChEBI" id="CHEBI:30616"/>
    </ligand>
</feature>
<feature type="binding site" evidence="1">
    <location>
        <position position="186"/>
    </location>
    <ligand>
        <name>substrate</name>
    </ligand>
</feature>
<dbReference type="EC" id="2.7.1.33" evidence="1"/>
<dbReference type="EMBL" id="AE000516">
    <property type="protein sequence ID" value="AAK48063.1"/>
    <property type="molecule type" value="Genomic_DNA"/>
</dbReference>
<dbReference type="PIR" id="A70955">
    <property type="entry name" value="A70955"/>
</dbReference>
<dbReference type="RefSeq" id="WP_003419517.1">
    <property type="nucleotide sequence ID" value="NZ_KK341227.1"/>
</dbReference>
<dbReference type="SMR" id="P9WPA0"/>
<dbReference type="KEGG" id="mtc:MT3706"/>
<dbReference type="PATRIC" id="fig|83331.31.peg.3988"/>
<dbReference type="HOGENOM" id="CLU_066627_1_0_11"/>
<dbReference type="UniPathway" id="UPA00241">
    <property type="reaction ID" value="UER00352"/>
</dbReference>
<dbReference type="Proteomes" id="UP000001020">
    <property type="component" value="Chromosome"/>
</dbReference>
<dbReference type="GO" id="GO:0005737">
    <property type="term" value="C:cytoplasm"/>
    <property type="evidence" value="ECO:0007669"/>
    <property type="project" value="UniProtKB-SubCell"/>
</dbReference>
<dbReference type="GO" id="GO:0005524">
    <property type="term" value="F:ATP binding"/>
    <property type="evidence" value="ECO:0007669"/>
    <property type="project" value="UniProtKB-UniRule"/>
</dbReference>
<dbReference type="GO" id="GO:0046872">
    <property type="term" value="F:metal ion binding"/>
    <property type="evidence" value="ECO:0007669"/>
    <property type="project" value="UniProtKB-KW"/>
</dbReference>
<dbReference type="GO" id="GO:0004594">
    <property type="term" value="F:pantothenate kinase activity"/>
    <property type="evidence" value="ECO:0007669"/>
    <property type="project" value="UniProtKB-UniRule"/>
</dbReference>
<dbReference type="GO" id="GO:0015937">
    <property type="term" value="P:coenzyme A biosynthetic process"/>
    <property type="evidence" value="ECO:0007669"/>
    <property type="project" value="UniProtKB-UniRule"/>
</dbReference>
<dbReference type="CDD" id="cd24015">
    <property type="entry name" value="ASKHA_NBD_PanK-III"/>
    <property type="match status" value="1"/>
</dbReference>
<dbReference type="FunFam" id="3.30.420.40:FF:000146">
    <property type="entry name" value="Type III pantothenate kinase"/>
    <property type="match status" value="1"/>
</dbReference>
<dbReference type="FunFam" id="3.30.420.40:FF:000223">
    <property type="entry name" value="Type III pantothenate kinase"/>
    <property type="match status" value="1"/>
</dbReference>
<dbReference type="Gene3D" id="3.30.420.40">
    <property type="match status" value="2"/>
</dbReference>
<dbReference type="HAMAP" id="MF_01274">
    <property type="entry name" value="Pantothen_kinase_3"/>
    <property type="match status" value="1"/>
</dbReference>
<dbReference type="InterPro" id="IPR043129">
    <property type="entry name" value="ATPase_NBD"/>
</dbReference>
<dbReference type="InterPro" id="IPR004619">
    <property type="entry name" value="Type_III_PanK"/>
</dbReference>
<dbReference type="NCBIfam" id="TIGR00671">
    <property type="entry name" value="baf"/>
    <property type="match status" value="1"/>
</dbReference>
<dbReference type="NCBIfam" id="NF009845">
    <property type="entry name" value="PRK13318.1-3"/>
    <property type="match status" value="1"/>
</dbReference>
<dbReference type="PANTHER" id="PTHR34265">
    <property type="entry name" value="TYPE III PANTOTHENATE KINASE"/>
    <property type="match status" value="1"/>
</dbReference>
<dbReference type="PANTHER" id="PTHR34265:SF1">
    <property type="entry name" value="TYPE III PANTOTHENATE KINASE"/>
    <property type="match status" value="1"/>
</dbReference>
<dbReference type="Pfam" id="PF03309">
    <property type="entry name" value="Pan_kinase"/>
    <property type="match status" value="1"/>
</dbReference>
<dbReference type="SUPFAM" id="SSF53067">
    <property type="entry name" value="Actin-like ATPase domain"/>
    <property type="match status" value="2"/>
</dbReference>
<proteinExistence type="inferred from homology"/>
<sequence length="272" mass="29305">MLLAIDVRNTHTVVGLLSGMKEHAKVVQQWRIRTESEVTADELALTIDGLIGEDSERLTGTAALSTVPSVLHEVRIMLDQYWPSVPHVLIEPGVRTGIPLLVDNPKEVGADRIVNCLAAYDRFRKAAIVVDFGSSICVDVVSAKGEFLGGAIAPGVQVSSDAAAARSAALRRVELARPRSVVGKNTVECMQAGAVFGFAGLVDGLVGRIREDVSGFSVDHDVAIVATGHTAPLLLPELHTVDHYDQHLTLQGLRLVFERNLEVQRGRLKTAR</sequence>
<keyword id="KW-0067">ATP-binding</keyword>
<keyword id="KW-0173">Coenzyme A biosynthesis</keyword>
<keyword id="KW-0963">Cytoplasm</keyword>
<keyword id="KW-0418">Kinase</keyword>
<keyword id="KW-0479">Metal-binding</keyword>
<keyword id="KW-0547">Nucleotide-binding</keyword>
<keyword id="KW-0630">Potassium</keyword>
<keyword id="KW-1185">Reference proteome</keyword>
<keyword id="KW-0808">Transferase</keyword>
<evidence type="ECO:0000255" key="1">
    <source>
        <dbReference type="HAMAP-Rule" id="MF_01274"/>
    </source>
</evidence>
<gene>
    <name evidence="1" type="primary">coaX</name>
    <name type="ordered locus">MT3706</name>
</gene>
<reference key="1">
    <citation type="journal article" date="2002" name="J. Bacteriol.">
        <title>Whole-genome comparison of Mycobacterium tuberculosis clinical and laboratory strains.</title>
        <authorList>
            <person name="Fleischmann R.D."/>
            <person name="Alland D."/>
            <person name="Eisen J.A."/>
            <person name="Carpenter L."/>
            <person name="White O."/>
            <person name="Peterson J.D."/>
            <person name="DeBoy R.T."/>
            <person name="Dodson R.J."/>
            <person name="Gwinn M.L."/>
            <person name="Haft D.H."/>
            <person name="Hickey E.K."/>
            <person name="Kolonay J.F."/>
            <person name="Nelson W.C."/>
            <person name="Umayam L.A."/>
            <person name="Ermolaeva M.D."/>
            <person name="Salzberg S.L."/>
            <person name="Delcher A."/>
            <person name="Utterback T.R."/>
            <person name="Weidman J.F."/>
            <person name="Khouri H.M."/>
            <person name="Gill J."/>
            <person name="Mikula A."/>
            <person name="Bishai W."/>
            <person name="Jacobs W.R. Jr."/>
            <person name="Venter J.C."/>
            <person name="Fraser C.M."/>
        </authorList>
    </citation>
    <scope>NUCLEOTIDE SEQUENCE [LARGE SCALE GENOMIC DNA]</scope>
    <source>
        <strain>CDC 1551 / Oshkosh</strain>
    </source>
</reference>
<accession>P9WPA0</accession>
<accession>L0TD10</accession>
<accession>O06282</accession>
<accession>Q7D576</accession>
<comment type="function">
    <text evidence="1">Catalyzes the phosphorylation of pantothenate (Pan), the first step in CoA biosynthesis.</text>
</comment>
<comment type="catalytic activity">
    <reaction evidence="1">
        <text>(R)-pantothenate + ATP = (R)-4'-phosphopantothenate + ADP + H(+)</text>
        <dbReference type="Rhea" id="RHEA:16373"/>
        <dbReference type="ChEBI" id="CHEBI:10986"/>
        <dbReference type="ChEBI" id="CHEBI:15378"/>
        <dbReference type="ChEBI" id="CHEBI:29032"/>
        <dbReference type="ChEBI" id="CHEBI:30616"/>
        <dbReference type="ChEBI" id="CHEBI:456216"/>
        <dbReference type="EC" id="2.7.1.33"/>
    </reaction>
</comment>
<comment type="cofactor">
    <cofactor evidence="1">
        <name>NH4(+)</name>
        <dbReference type="ChEBI" id="CHEBI:28938"/>
    </cofactor>
    <cofactor evidence="1">
        <name>K(+)</name>
        <dbReference type="ChEBI" id="CHEBI:29103"/>
    </cofactor>
    <text evidence="1">A monovalent cation. Ammonium or potassium.</text>
</comment>
<comment type="pathway">
    <text evidence="1">Cofactor biosynthesis; coenzyme A biosynthesis; CoA from (R)-pantothenate: step 1/5.</text>
</comment>
<comment type="subunit">
    <text evidence="1">Homodimer.</text>
</comment>
<comment type="subcellular location">
    <subcellularLocation>
        <location evidence="1">Cytoplasm</location>
    </subcellularLocation>
</comment>
<comment type="similarity">
    <text evidence="1">Belongs to the type III pantothenate kinase family.</text>
</comment>
<protein>
    <recommendedName>
        <fullName evidence="1">Type III pantothenate kinase</fullName>
        <ecNumber evidence="1">2.7.1.33</ecNumber>
    </recommendedName>
    <alternativeName>
        <fullName evidence="1">PanK-III</fullName>
    </alternativeName>
    <alternativeName>
        <fullName evidence="1">Pantothenic acid kinase</fullName>
    </alternativeName>
</protein>